<dbReference type="EMBL" id="AB168217">
    <property type="protein sequence ID" value="BAE00342.1"/>
    <property type="molecule type" value="mRNA"/>
</dbReference>
<dbReference type="RefSeq" id="NP_001270355.1">
    <property type="nucleotide sequence ID" value="NM_001283426.1"/>
</dbReference>
<dbReference type="RefSeq" id="XP_015289657.1">
    <property type="nucleotide sequence ID" value="XM_015434171.1"/>
</dbReference>
<dbReference type="RefSeq" id="XP_015289659.1">
    <property type="nucleotide sequence ID" value="XM_015434173.1"/>
</dbReference>
<dbReference type="SMR" id="Q4R979"/>
<dbReference type="STRING" id="9541.ENSMFAP00000007335"/>
<dbReference type="Ensembl" id="ENSMFAT00000008907.2">
    <property type="protein sequence ID" value="ENSMFAP00000034677.1"/>
    <property type="gene ID" value="ENSMFAG00000052468.1"/>
</dbReference>
<dbReference type="VEuPathDB" id="HostDB:ENSMFAG00000003827"/>
<dbReference type="eggNOG" id="KOG0109">
    <property type="taxonomic scope" value="Eukaryota"/>
</dbReference>
<dbReference type="GeneTree" id="ENSGT00940000154421"/>
<dbReference type="Proteomes" id="UP000233100">
    <property type="component" value="Chromosome 14"/>
</dbReference>
<dbReference type="GO" id="GO:0005737">
    <property type="term" value="C:cytoplasm"/>
    <property type="evidence" value="ECO:0000250"/>
    <property type="project" value="UniProtKB"/>
</dbReference>
<dbReference type="GO" id="GO:0010494">
    <property type="term" value="C:cytoplasmic stress granule"/>
    <property type="evidence" value="ECO:0000250"/>
    <property type="project" value="UniProtKB"/>
</dbReference>
<dbReference type="GO" id="GO:0005829">
    <property type="term" value="C:cytosol"/>
    <property type="evidence" value="ECO:0007669"/>
    <property type="project" value="Ensembl"/>
</dbReference>
<dbReference type="GO" id="GO:0016607">
    <property type="term" value="C:nuclear speck"/>
    <property type="evidence" value="ECO:0000250"/>
    <property type="project" value="UniProtKB"/>
</dbReference>
<dbReference type="GO" id="GO:0005730">
    <property type="term" value="C:nucleolus"/>
    <property type="evidence" value="ECO:0000250"/>
    <property type="project" value="UniProtKB"/>
</dbReference>
<dbReference type="GO" id="GO:0005654">
    <property type="term" value="C:nucleoplasm"/>
    <property type="evidence" value="ECO:0000250"/>
    <property type="project" value="UniProtKB"/>
</dbReference>
<dbReference type="GO" id="GO:0005634">
    <property type="term" value="C:nucleus"/>
    <property type="evidence" value="ECO:0000250"/>
    <property type="project" value="UniProtKB"/>
</dbReference>
<dbReference type="GO" id="GO:0048471">
    <property type="term" value="C:perinuclear region of cytoplasm"/>
    <property type="evidence" value="ECO:0007669"/>
    <property type="project" value="Ensembl"/>
</dbReference>
<dbReference type="GO" id="GO:0030332">
    <property type="term" value="F:cyclin binding"/>
    <property type="evidence" value="ECO:0007669"/>
    <property type="project" value="Ensembl"/>
</dbReference>
<dbReference type="GO" id="GO:0035198">
    <property type="term" value="F:miRNA binding"/>
    <property type="evidence" value="ECO:0000250"/>
    <property type="project" value="UniProtKB"/>
</dbReference>
<dbReference type="GO" id="GO:0003730">
    <property type="term" value="F:mRNA 3'-UTR binding"/>
    <property type="evidence" value="ECO:0000250"/>
    <property type="project" value="UniProtKB"/>
</dbReference>
<dbReference type="GO" id="GO:0003729">
    <property type="term" value="F:mRNA binding"/>
    <property type="evidence" value="ECO:0000250"/>
    <property type="project" value="UniProtKB"/>
</dbReference>
<dbReference type="GO" id="GO:0036002">
    <property type="term" value="F:pre-mRNA binding"/>
    <property type="evidence" value="ECO:0000250"/>
    <property type="project" value="UniProtKB"/>
</dbReference>
<dbReference type="GO" id="GO:0097157">
    <property type="term" value="F:pre-mRNA intronic binding"/>
    <property type="evidence" value="ECO:0000250"/>
    <property type="project" value="UniProtKB"/>
</dbReference>
<dbReference type="GO" id="GO:0097158">
    <property type="term" value="F:pre-mRNA intronic pyrimidine-rich binding"/>
    <property type="evidence" value="ECO:0000250"/>
    <property type="project" value="UniProtKB"/>
</dbReference>
<dbReference type="GO" id="GO:0003723">
    <property type="term" value="F:RNA binding"/>
    <property type="evidence" value="ECO:0000250"/>
    <property type="project" value="UniProtKB"/>
</dbReference>
<dbReference type="GO" id="GO:0008270">
    <property type="term" value="F:zinc ion binding"/>
    <property type="evidence" value="ECO:0007669"/>
    <property type="project" value="UniProtKB-KW"/>
</dbReference>
<dbReference type="GO" id="GO:0002190">
    <property type="term" value="P:cap-independent translational initiation"/>
    <property type="evidence" value="ECO:0000250"/>
    <property type="project" value="UniProtKB"/>
</dbReference>
<dbReference type="GO" id="GO:0032922">
    <property type="term" value="P:circadian regulation of gene expression"/>
    <property type="evidence" value="ECO:0007669"/>
    <property type="project" value="Ensembl"/>
</dbReference>
<dbReference type="GO" id="GO:0097167">
    <property type="term" value="P:circadian regulation of translation"/>
    <property type="evidence" value="ECO:0000250"/>
    <property type="project" value="UniProtKB"/>
</dbReference>
<dbReference type="GO" id="GO:0035883">
    <property type="term" value="P:enteroendocrine cell differentiation"/>
    <property type="evidence" value="ECO:0007669"/>
    <property type="project" value="Ensembl"/>
</dbReference>
<dbReference type="GO" id="GO:0043153">
    <property type="term" value="P:entrainment of circadian clock by photoperiod"/>
    <property type="evidence" value="ECO:0000250"/>
    <property type="project" value="UniProtKB"/>
</dbReference>
<dbReference type="GO" id="GO:0035773">
    <property type="term" value="P:insulin secretion involved in cellular response to glucose stimulus"/>
    <property type="evidence" value="ECO:0007669"/>
    <property type="project" value="Ensembl"/>
</dbReference>
<dbReference type="GO" id="GO:0002192">
    <property type="term" value="P:IRES-dependent translational initiation of linear mRNA"/>
    <property type="evidence" value="ECO:0000250"/>
    <property type="project" value="UniProtKB"/>
</dbReference>
<dbReference type="GO" id="GO:0035278">
    <property type="term" value="P:miRNA-mediated gene silencing by inhibition of translation"/>
    <property type="evidence" value="ECO:0000250"/>
    <property type="project" value="UniProtKB"/>
</dbReference>
<dbReference type="GO" id="GO:0006397">
    <property type="term" value="P:mRNA processing"/>
    <property type="evidence" value="ECO:0007669"/>
    <property type="project" value="UniProtKB-KW"/>
</dbReference>
<dbReference type="GO" id="GO:0017148">
    <property type="term" value="P:negative regulation of translation"/>
    <property type="evidence" value="ECO:0000250"/>
    <property type="project" value="UniProtKB"/>
</dbReference>
<dbReference type="GO" id="GO:0032055">
    <property type="term" value="P:negative regulation of translation in response to stress"/>
    <property type="evidence" value="ECO:0000250"/>
    <property type="project" value="UniProtKB"/>
</dbReference>
<dbReference type="GO" id="GO:0045947">
    <property type="term" value="P:negative regulation of translational initiation"/>
    <property type="evidence" value="ECO:0000250"/>
    <property type="project" value="UniProtKB"/>
</dbReference>
<dbReference type="GO" id="GO:0031016">
    <property type="term" value="P:pancreas development"/>
    <property type="evidence" value="ECO:0007669"/>
    <property type="project" value="Ensembl"/>
</dbReference>
<dbReference type="GO" id="GO:0051149">
    <property type="term" value="P:positive regulation of muscle cell differentiation"/>
    <property type="evidence" value="ECO:0000250"/>
    <property type="project" value="UniProtKB"/>
</dbReference>
<dbReference type="GO" id="GO:0045727">
    <property type="term" value="P:positive regulation of translation"/>
    <property type="evidence" value="ECO:0007669"/>
    <property type="project" value="Ensembl"/>
</dbReference>
<dbReference type="GO" id="GO:0000381">
    <property type="term" value="P:regulation of alternative mRNA splicing, via spliceosome"/>
    <property type="evidence" value="ECO:0000250"/>
    <property type="project" value="UniProtKB"/>
</dbReference>
<dbReference type="GO" id="GO:0046626">
    <property type="term" value="P:regulation of insulin receptor signaling pathway"/>
    <property type="evidence" value="ECO:0007669"/>
    <property type="project" value="Ensembl"/>
</dbReference>
<dbReference type="GO" id="GO:0046822">
    <property type="term" value="P:regulation of nucleocytoplasmic transport"/>
    <property type="evidence" value="ECO:0000250"/>
    <property type="project" value="UniProtKB"/>
</dbReference>
<dbReference type="GO" id="GO:0046685">
    <property type="term" value="P:response to arsenic-containing substance"/>
    <property type="evidence" value="ECO:0000250"/>
    <property type="project" value="UniProtKB"/>
</dbReference>
<dbReference type="GO" id="GO:0008380">
    <property type="term" value="P:RNA splicing"/>
    <property type="evidence" value="ECO:0007669"/>
    <property type="project" value="UniProtKB-KW"/>
</dbReference>
<dbReference type="CDD" id="cd12606">
    <property type="entry name" value="RRM1_RBM4"/>
    <property type="match status" value="1"/>
</dbReference>
<dbReference type="CDD" id="cd12607">
    <property type="entry name" value="RRM2_RBM4"/>
    <property type="match status" value="1"/>
</dbReference>
<dbReference type="FunFam" id="3.30.70.330:FF:000058">
    <property type="entry name" value="RNA-binding motif protein 4"/>
    <property type="match status" value="1"/>
</dbReference>
<dbReference type="FunFam" id="3.30.70.330:FF:000085">
    <property type="entry name" value="RNA-binding protein 4 isoform X1"/>
    <property type="match status" value="1"/>
</dbReference>
<dbReference type="FunFam" id="4.10.60.10:FF:000015">
    <property type="entry name" value="RNA-binding protein 4B isoform X1"/>
    <property type="match status" value="1"/>
</dbReference>
<dbReference type="Gene3D" id="3.30.70.330">
    <property type="match status" value="2"/>
</dbReference>
<dbReference type="Gene3D" id="4.10.60.10">
    <property type="entry name" value="Zinc finger, CCHC-type"/>
    <property type="match status" value="1"/>
</dbReference>
<dbReference type="InterPro" id="IPR050502">
    <property type="entry name" value="Euk_RNA-bind_prot"/>
</dbReference>
<dbReference type="InterPro" id="IPR012677">
    <property type="entry name" value="Nucleotide-bd_a/b_plait_sf"/>
</dbReference>
<dbReference type="InterPro" id="IPR035979">
    <property type="entry name" value="RBD_domain_sf"/>
</dbReference>
<dbReference type="InterPro" id="IPR034897">
    <property type="entry name" value="RBM4_RRM1"/>
</dbReference>
<dbReference type="InterPro" id="IPR034898">
    <property type="entry name" value="RBM4_RRM2"/>
</dbReference>
<dbReference type="InterPro" id="IPR000504">
    <property type="entry name" value="RRM_dom"/>
</dbReference>
<dbReference type="InterPro" id="IPR001878">
    <property type="entry name" value="Znf_CCHC"/>
</dbReference>
<dbReference type="PANTHER" id="PTHR48025:SF26">
    <property type="entry name" value="HETEROGENEOUS NUCLEAR RIBONUCLEOPROTEIN M-RELATED"/>
    <property type="match status" value="1"/>
</dbReference>
<dbReference type="PANTHER" id="PTHR48025">
    <property type="entry name" value="OS02G0815200 PROTEIN"/>
    <property type="match status" value="1"/>
</dbReference>
<dbReference type="Pfam" id="PF00076">
    <property type="entry name" value="RRM_1"/>
    <property type="match status" value="2"/>
</dbReference>
<dbReference type="Pfam" id="PF00098">
    <property type="entry name" value="zf-CCHC"/>
    <property type="match status" value="1"/>
</dbReference>
<dbReference type="SMART" id="SM00360">
    <property type="entry name" value="RRM"/>
    <property type="match status" value="2"/>
</dbReference>
<dbReference type="SMART" id="SM00343">
    <property type="entry name" value="ZnF_C2HC"/>
    <property type="match status" value="1"/>
</dbReference>
<dbReference type="SUPFAM" id="SSF54928">
    <property type="entry name" value="RNA-binding domain, RBD"/>
    <property type="match status" value="2"/>
</dbReference>
<dbReference type="PROSITE" id="PS50102">
    <property type="entry name" value="RRM"/>
    <property type="match status" value="2"/>
</dbReference>
<dbReference type="PROSITE" id="PS50158">
    <property type="entry name" value="ZF_CCHC"/>
    <property type="match status" value="1"/>
</dbReference>
<organism>
    <name type="scientific">Macaca fascicularis</name>
    <name type="common">Crab-eating macaque</name>
    <name type="synonym">Cynomolgus monkey</name>
    <dbReference type="NCBI Taxonomy" id="9541"/>
    <lineage>
        <taxon>Eukaryota</taxon>
        <taxon>Metazoa</taxon>
        <taxon>Chordata</taxon>
        <taxon>Craniata</taxon>
        <taxon>Vertebrata</taxon>
        <taxon>Euteleostomi</taxon>
        <taxon>Mammalia</taxon>
        <taxon>Eutheria</taxon>
        <taxon>Euarchontoglires</taxon>
        <taxon>Primates</taxon>
        <taxon>Haplorrhini</taxon>
        <taxon>Catarrhini</taxon>
        <taxon>Cercopithecidae</taxon>
        <taxon>Cercopithecinae</taxon>
        <taxon>Macaca</taxon>
    </lineage>
</organism>
<keyword id="KW-0010">Activator</keyword>
<keyword id="KW-0963">Cytoplasm</keyword>
<keyword id="KW-0221">Differentiation</keyword>
<keyword id="KW-1017">Isopeptide bond</keyword>
<keyword id="KW-0479">Metal-binding</keyword>
<keyword id="KW-0507">mRNA processing</keyword>
<keyword id="KW-0508">mRNA splicing</keyword>
<keyword id="KW-0539">Nucleus</keyword>
<keyword id="KW-0597">Phosphoprotein</keyword>
<keyword id="KW-1185">Reference proteome</keyword>
<keyword id="KW-0677">Repeat</keyword>
<keyword id="KW-0694">RNA-binding</keyword>
<keyword id="KW-0943">RNA-mediated gene silencing</keyword>
<keyword id="KW-0832">Ubl conjugation</keyword>
<keyword id="KW-0862">Zinc</keyword>
<keyword id="KW-0863">Zinc-finger</keyword>
<name>RBM4_MACFA</name>
<gene>
    <name type="primary">RBM4</name>
    <name type="ORF">QtsA-10585</name>
</gene>
<proteinExistence type="evidence at transcript level"/>
<comment type="function">
    <text evidence="1">RNA-binding factor involved in multiple aspects of cellular processes like alternative splicing of pre-mRNA and translation regulation. Modulates alternative 5'-splice site and exon selection. Acts as a muscle cell differentiation-promoting factor. Activates exon skipping of the PTB pre-mRNA during muscle cell differentiation. Antagonizes the activity of the splicing factor PTBP1 to modulate muscle cell-specific exon selection of alpha tropomyosin. Binds to intronic pyrimidine-rich sequence of the TPM1 and MAPT pre-mRNAs. Required for the translational activation of PER1 mRNA in response to circadian clock. Binds directly to the 3'-UTR of the PER1 mRNA. Exerts a suppressive activity on Cap-dependent translation via binding to CU-rich responsive elements within the 3'UTR of mRNAs, a process increased under stress conditions or during myocytes differentiation. Recruits EIF4A1 to stimulate IRES-dependent translation initiation in respons to cellular stress. Associates to internal ribosome entry segment (IRES) in target mRNA species under stress conditions. Plays a role for miRNA-guided RNA cleavage and translation suppression by promoting association of AGO2-containing miRNPs with their cognate target mRNAs. Associates with miRNAs during muscle cell differentiation. Binds preferentially to 5'-CGCGCG[GCA]-3' motif in vitro (By similarity).</text>
</comment>
<comment type="subunit">
    <text evidence="2">Interacts with TNPO3; the interaction mediates nuclear import of the protein and is disrupted by nuclear Ran bound to GTP. Interacts with EIF4G1 and WT1. Interacts with EIF4A1; the interaction is modulated under stress-induced conditions. Interacts with AGO1. Interacts with AGO2; the interaction occurs under both cell proliferation and differentiation conditions and in an RNA- and phosphorylation-independent manner. Interacts with DDX5; the interaction occurs in an RNA-independent manner. Interacts with RBPMS; the interaction allows cooperative assembly of RNA-bound stable cell-specific alternative splicing regulatory complexes.</text>
</comment>
<comment type="subcellular location">
    <subcellularLocation>
        <location evidence="1">Nucleus</location>
    </subcellularLocation>
    <subcellularLocation>
        <location evidence="1">Nucleus</location>
        <location evidence="1">Nucleolus</location>
    </subcellularLocation>
    <subcellularLocation>
        <location evidence="1">Nucleus speckle</location>
    </subcellularLocation>
    <subcellularLocation>
        <location evidence="1">Cytoplasm</location>
    </subcellularLocation>
    <subcellularLocation>
        <location evidence="1">Cytoplasmic granule</location>
    </subcellularLocation>
    <text evidence="1">Undergoes continuous nucleocytoplasmic shuttling. Upon nuclear import colocalizes with SR proteins in nuclear speckles. Arsenite stress-induced phosphorylation increases its subcellular relocalization from the nucleus to the cytoplasm and to cytoplasmic stress granules (SG) via a p38 MAPK signaling pathway. Primarily localized in nucleus and nucleoli under cell growth conditions and accumulated in the cytoplasm and cytoplasm perinuclear granules upon muscle cell differentiation (By similarity).</text>
</comment>
<comment type="PTM">
    <text evidence="1">Phosphorylated. Phosphorylated in vitro on Ser-309 by SRPK1. Phosphorylation on Ser-309 is induced upon cell stress signaling, which alters its subcellular localization and may modulate its activity on IRES-mediated mRNA translation. Phosphorylation on Ser-309 is induced upon cell muscle differentiation (By similarity).</text>
</comment>
<feature type="chain" id="PRO_0000270147" description="RNA-binding protein 4">
    <location>
        <begin position="1"/>
        <end position="364"/>
    </location>
</feature>
<feature type="domain" description="RRM 1" evidence="4">
    <location>
        <begin position="2"/>
        <end position="72"/>
    </location>
</feature>
<feature type="domain" description="RRM 2" evidence="4">
    <location>
        <begin position="78"/>
        <end position="148"/>
    </location>
</feature>
<feature type="zinc finger region" description="CCHC-type" evidence="3">
    <location>
        <begin position="160"/>
        <end position="177"/>
    </location>
</feature>
<feature type="region of interest" description="Interaction with TNPO3" evidence="1">
    <location>
        <begin position="196"/>
        <end position="364"/>
    </location>
</feature>
<feature type="modified residue" description="Phosphoserine" evidence="2">
    <location>
        <position position="86"/>
    </location>
</feature>
<feature type="modified residue" description="Phosphoserine" evidence="2">
    <location>
        <position position="309"/>
    </location>
</feature>
<feature type="cross-link" description="Glycyl lysine isopeptide (Lys-Gly) (interchain with G-Cter in SUMO2)" evidence="2">
    <location>
        <position position="79"/>
    </location>
</feature>
<feature type="cross-link" description="Glycyl lysine isopeptide (Lys-Gly) (interchain with G-Cter in SUMO2)" evidence="2">
    <location>
        <position position="92"/>
    </location>
</feature>
<sequence>MVKLFIGNLPREATEQEIRSLFEQYGKVLECDIIKNYGFVHIEDKTAAEDAIRNLHHYKLHGVNINVEASKNKSKTSTKLHVGNISPTCTNKELRAKFEEYGPVIECDIVKDYAFVHMERAEDAVEAIRGLDNTEFQGKRMHVQLSTSRLRTAPGMGDQSGCYRCGKEGHWSKECPIDRSGRVADLTEQYNEQYGAVRTPYTMSYGDSLYYNNAYGALDAYYKRCRAARSYEAVAAAAASVYNYAEQTLSQLPQVQNTAMASHLTSTSLDPYDRHLLPTSGAAATAAAAAAAAAAVTAASTSYYGRDRSPLRRATAPVPTVGEGYGYGHESELSQASAAARNSLYDMARYEREQYADRARYSAF</sequence>
<accession>Q4R979</accession>
<protein>
    <recommendedName>
        <fullName>RNA-binding protein 4</fullName>
    </recommendedName>
    <alternativeName>
        <fullName>RNA-binding motif protein 4</fullName>
    </alternativeName>
</protein>
<evidence type="ECO:0000250" key="1"/>
<evidence type="ECO:0000250" key="2">
    <source>
        <dbReference type="UniProtKB" id="Q9BWF3"/>
    </source>
</evidence>
<evidence type="ECO:0000255" key="3">
    <source>
        <dbReference type="PROSITE-ProRule" id="PRU00047"/>
    </source>
</evidence>
<evidence type="ECO:0000255" key="4">
    <source>
        <dbReference type="PROSITE-ProRule" id="PRU00176"/>
    </source>
</evidence>
<reference key="1">
    <citation type="submission" date="2005-06" db="EMBL/GenBank/DDBJ databases">
        <title>DNA sequences of macaque genes expressed in brain or testis and its evolutionary implications.</title>
        <authorList>
            <consortium name="International consortium for macaque cDNA sequencing and analysis"/>
        </authorList>
    </citation>
    <scope>NUCLEOTIDE SEQUENCE [LARGE SCALE MRNA]</scope>
    <source>
        <tissue>Testis</tissue>
    </source>
</reference>